<accession>Q5HZE2</accession>
<protein>
    <recommendedName>
        <fullName evidence="3">Transmembrane protein 120A</fullName>
    </recommendedName>
    <alternativeName>
        <fullName evidence="1">Ion channel TACAN</fullName>
    </alternativeName>
</protein>
<organism>
    <name type="scientific">Rattus norvegicus</name>
    <name type="common">Rat</name>
    <dbReference type="NCBI Taxonomy" id="10116"/>
    <lineage>
        <taxon>Eukaryota</taxon>
        <taxon>Metazoa</taxon>
        <taxon>Chordata</taxon>
        <taxon>Craniata</taxon>
        <taxon>Vertebrata</taxon>
        <taxon>Euteleostomi</taxon>
        <taxon>Mammalia</taxon>
        <taxon>Eutheria</taxon>
        <taxon>Euarchontoglires</taxon>
        <taxon>Glires</taxon>
        <taxon>Rodentia</taxon>
        <taxon>Myomorpha</taxon>
        <taxon>Muroidea</taxon>
        <taxon>Muridae</taxon>
        <taxon>Murinae</taxon>
        <taxon>Rattus</taxon>
    </lineage>
</organism>
<comment type="function">
    <text evidence="1 2">Multifunctional protein involved in mechanosensation, and plays an essential role in lipid metabolism and adipocyte differentiation. May function as a potential ion channel involved in sensing mechanical stimuli. Mediates the mechanosensitivity of the PKD2-TMEM120A channel complex through direct physical interaction (By similarity). TMEM120A seems to affect mechanosensation by inhibiting PIEZO2 channels, possibly by altering cellular lipid content (By similarity). TMEM120A is structurally similar to a lipid-modifying enzyme, ELOVL7, and contains a bound coenzyme A molecule, which suggests it might function as an enzyme in lipid metabolism. Additionnaly, implicated in innate immune response against Zika virus. Acts as a key activator of the antiviral signaling involving STING1 (By similarity).</text>
</comment>
<comment type="subunit">
    <text evidence="2">Homodimer. Forms heterooligomer with TMEM120B. Interacts with PKD2; TMEM120A inhibits PKD2 channel activity through the physical association of PKD2 with TMEM120A.</text>
</comment>
<comment type="subcellular location">
    <subcellularLocation>
        <location evidence="2">Cell membrane</location>
        <topology evidence="2">Multi-pass membrane protein</topology>
    </subcellularLocation>
    <subcellularLocation>
        <location evidence="1">Nucleus inner membrane</location>
        <topology evidence="2">Multi-pass membrane protein</topology>
    </subcellularLocation>
    <subcellularLocation>
        <location evidence="2">Endoplasmic reticulum</location>
    </subcellularLocation>
</comment>
<comment type="domain">
    <text evidence="2">The transmembrane domain (TMD) has structural homology to the very long chain fatty acid elongase 7, ELOVL7, despite low sequence homology between them.</text>
</comment>
<comment type="similarity">
    <text evidence="3">Belongs to the TMEM120 family.</text>
</comment>
<comment type="caution">
    <text evidence="2 3">Whether TMEM120S functions as a mechanosensitive ion channel is controversial (By similarity). Several studies show that TMEM120A does not exhibit mechanosensitive channel activity and display no typical ion channel structural characteristics (By similarity). One publication, however, suggests the presence of a potential ion permeation pathway based on molecular dynamics simulation (By similarity). Its structural homology to ELOVL7, leads to suggest than TMEM120A may function as an enzyme involved in fatty acid metabolism, although its enzymatic activity and its potential substrates remain unknown (By similarity). Whether TMEM120A is an enzyme rather than an ion channel is still under debate.</text>
</comment>
<reference key="1">
    <citation type="journal article" date="2004" name="Genome Res.">
        <title>The status, quality, and expansion of the NIH full-length cDNA project: the Mammalian Gene Collection (MGC).</title>
        <authorList>
            <consortium name="The MGC Project Team"/>
        </authorList>
    </citation>
    <scope>NUCLEOTIDE SEQUENCE [LARGE SCALE MRNA]</scope>
    <source>
        <tissue>Ovary</tissue>
    </source>
</reference>
<evidence type="ECO:0000250" key="1">
    <source>
        <dbReference type="UniProtKB" id="Q8C1E7"/>
    </source>
</evidence>
<evidence type="ECO:0000250" key="2">
    <source>
        <dbReference type="UniProtKB" id="Q9BXJ8"/>
    </source>
</evidence>
<evidence type="ECO:0000305" key="3"/>
<evidence type="ECO:0000312" key="4">
    <source>
        <dbReference type="RGD" id="1311474"/>
    </source>
</evidence>
<dbReference type="EMBL" id="BC089063">
    <property type="protein sequence ID" value="AAH89063.1"/>
    <property type="molecule type" value="mRNA"/>
</dbReference>
<dbReference type="RefSeq" id="NP_001010945.1">
    <property type="nucleotide sequence ID" value="NM_001010945.2"/>
</dbReference>
<dbReference type="SMR" id="Q5HZE2"/>
<dbReference type="FunCoup" id="Q5HZE2">
    <property type="interactions" value="685"/>
</dbReference>
<dbReference type="STRING" id="10116.ENSRNOP00000001960"/>
<dbReference type="PhosphoSitePlus" id="Q5HZE2"/>
<dbReference type="jPOST" id="Q5HZE2"/>
<dbReference type="PaxDb" id="10116-ENSRNOP00000001960"/>
<dbReference type="Ensembl" id="ENSRNOT00000115876.1">
    <property type="protein sequence ID" value="ENSRNOP00000085652.1"/>
    <property type="gene ID" value="ENSRNOG00000001441.8"/>
</dbReference>
<dbReference type="GeneID" id="288591"/>
<dbReference type="KEGG" id="rno:288591"/>
<dbReference type="UCSC" id="RGD:1311474">
    <property type="organism name" value="rat"/>
</dbReference>
<dbReference type="AGR" id="RGD:1311474"/>
<dbReference type="CTD" id="83862"/>
<dbReference type="RGD" id="1311474">
    <property type="gene designation" value="Tmem120a"/>
</dbReference>
<dbReference type="eggNOG" id="KOG4758">
    <property type="taxonomic scope" value="Eukaryota"/>
</dbReference>
<dbReference type="GeneTree" id="ENSGT00390000007848"/>
<dbReference type="HOGENOM" id="CLU_048749_1_1_1"/>
<dbReference type="InParanoid" id="Q5HZE2"/>
<dbReference type="OrthoDB" id="2015098at2759"/>
<dbReference type="PhylomeDB" id="Q5HZE2"/>
<dbReference type="TreeFam" id="TF313552"/>
<dbReference type="PRO" id="PR:Q5HZE2"/>
<dbReference type="Proteomes" id="UP000002494">
    <property type="component" value="Chromosome 12"/>
</dbReference>
<dbReference type="Bgee" id="ENSRNOG00000001441">
    <property type="expression patterns" value="Expressed in jejunum and 18 other cell types or tissues"/>
</dbReference>
<dbReference type="GO" id="GO:0005783">
    <property type="term" value="C:endoplasmic reticulum"/>
    <property type="evidence" value="ECO:0000266"/>
    <property type="project" value="RGD"/>
</dbReference>
<dbReference type="GO" id="GO:0016020">
    <property type="term" value="C:membrane"/>
    <property type="evidence" value="ECO:0000318"/>
    <property type="project" value="GO_Central"/>
</dbReference>
<dbReference type="GO" id="GO:0005637">
    <property type="term" value="C:nuclear inner membrane"/>
    <property type="evidence" value="ECO:0000266"/>
    <property type="project" value="RGD"/>
</dbReference>
<dbReference type="GO" id="GO:0005886">
    <property type="term" value="C:plasma membrane"/>
    <property type="evidence" value="ECO:0000250"/>
    <property type="project" value="UniProtKB"/>
</dbReference>
<dbReference type="GO" id="GO:0120225">
    <property type="term" value="F:coenzyme A binding"/>
    <property type="evidence" value="ECO:0000250"/>
    <property type="project" value="UniProtKB"/>
</dbReference>
<dbReference type="GO" id="GO:0005216">
    <property type="term" value="F:monoatomic ion channel activity"/>
    <property type="evidence" value="ECO:0000250"/>
    <property type="project" value="UniProtKB"/>
</dbReference>
<dbReference type="GO" id="GO:0140374">
    <property type="term" value="P:antiviral innate immune response"/>
    <property type="evidence" value="ECO:0000266"/>
    <property type="project" value="RGD"/>
</dbReference>
<dbReference type="GO" id="GO:0050966">
    <property type="term" value="P:detection of mechanical stimulus involved in sensory perception of pain"/>
    <property type="evidence" value="ECO:0000250"/>
    <property type="project" value="UniProtKB"/>
</dbReference>
<dbReference type="GO" id="GO:0045444">
    <property type="term" value="P:fat cell differentiation"/>
    <property type="evidence" value="ECO:0000250"/>
    <property type="project" value="UniProtKB"/>
</dbReference>
<dbReference type="GO" id="GO:0034220">
    <property type="term" value="P:monoatomic ion transmembrane transport"/>
    <property type="evidence" value="ECO:0000250"/>
    <property type="project" value="UniProtKB"/>
</dbReference>
<dbReference type="GO" id="GO:0051291">
    <property type="term" value="P:protein heterooligomerization"/>
    <property type="evidence" value="ECO:0000250"/>
    <property type="project" value="UniProtKB"/>
</dbReference>
<dbReference type="GO" id="GO:0051260">
    <property type="term" value="P:protein homooligomerization"/>
    <property type="evidence" value="ECO:0000250"/>
    <property type="project" value="UniProtKB"/>
</dbReference>
<dbReference type="InterPro" id="IPR012926">
    <property type="entry name" value="TMEM120A/B"/>
</dbReference>
<dbReference type="PANTHER" id="PTHR21433:SF1">
    <property type="entry name" value="ION CHANNEL TACAN"/>
    <property type="match status" value="1"/>
</dbReference>
<dbReference type="PANTHER" id="PTHR21433">
    <property type="entry name" value="TRANSMEMBRANE PROTEIN INDUCED BY TUMOR NECROSIS FACTOR ALPHA"/>
    <property type="match status" value="1"/>
</dbReference>
<dbReference type="Pfam" id="PF07851">
    <property type="entry name" value="TMEM120A-B"/>
    <property type="match status" value="1"/>
</dbReference>
<feature type="chain" id="PRO_0000309341" description="Transmembrane protein 120A">
    <location>
        <begin position="1"/>
        <end position="343"/>
    </location>
</feature>
<feature type="topological domain" description="Cytoplasmic" evidence="3">
    <location>
        <begin position="1"/>
        <end position="132"/>
    </location>
</feature>
<feature type="transmembrane region" description="Helical; Name=1" evidence="2">
    <location>
        <begin position="133"/>
        <end position="152"/>
    </location>
</feature>
<feature type="topological domain" description="Extracellular" evidence="3">
    <location>
        <begin position="153"/>
        <end position="158"/>
    </location>
</feature>
<feature type="transmembrane region" description="Helical; Name=2" evidence="2">
    <location>
        <begin position="159"/>
        <end position="177"/>
    </location>
</feature>
<feature type="topological domain" description="Cytoplasmic" evidence="3">
    <location>
        <begin position="178"/>
        <end position="190"/>
    </location>
</feature>
<feature type="transmembrane region" description="Helical; Name=3" evidence="2">
    <location>
        <begin position="191"/>
        <end position="209"/>
    </location>
</feature>
<feature type="topological domain" description="Extracellular" evidence="3">
    <location>
        <begin position="210"/>
        <end position="218"/>
    </location>
</feature>
<feature type="transmembrane region" description="Helical; Name=4" evidence="2">
    <location>
        <begin position="219"/>
        <end position="240"/>
    </location>
</feature>
<feature type="topological domain" description="Cytoplasmic" evidence="3">
    <location>
        <begin position="241"/>
        <end position="270"/>
    </location>
</feature>
<feature type="transmembrane region" description="Helical; Name=5" evidence="2">
    <location>
        <begin position="271"/>
        <end position="294"/>
    </location>
</feature>
<feature type="topological domain" description="Extracellular" evidence="3">
    <location>
        <begin position="295"/>
        <end position="304"/>
    </location>
</feature>
<feature type="transmembrane region" description="Helical; Name=6" evidence="2">
    <location>
        <begin position="305"/>
        <end position="330"/>
    </location>
</feature>
<feature type="topological domain" description="Cytoplasmic" evidence="3">
    <location>
        <begin position="331"/>
        <end position="343"/>
    </location>
</feature>
<feature type="binding site" evidence="2">
    <location>
        <position position="130"/>
    </location>
    <ligand>
        <name>CoA</name>
        <dbReference type="ChEBI" id="CHEBI:57287"/>
    </ligand>
</feature>
<feature type="binding site" evidence="2">
    <location>
        <position position="187"/>
    </location>
    <ligand>
        <name>CoA</name>
        <dbReference type="ChEBI" id="CHEBI:57287"/>
    </ligand>
</feature>
<feature type="binding site" evidence="2">
    <location>
        <position position="188"/>
    </location>
    <ligand>
        <name>CoA</name>
        <dbReference type="ChEBI" id="CHEBI:57287"/>
    </ligand>
</feature>
<feature type="binding site" evidence="2">
    <location>
        <position position="237"/>
    </location>
    <ligand>
        <name>CoA</name>
        <dbReference type="ChEBI" id="CHEBI:57287"/>
    </ligand>
</feature>
<feature type="binding site" evidence="2">
    <location>
        <position position="240"/>
    </location>
    <ligand>
        <name>CoA</name>
        <dbReference type="ChEBI" id="CHEBI:57287"/>
    </ligand>
</feature>
<feature type="binding site" evidence="2">
    <location>
        <position position="241"/>
    </location>
    <ligand>
        <name>CoA</name>
        <dbReference type="ChEBI" id="CHEBI:57287"/>
    </ligand>
</feature>
<feature type="binding site" evidence="1">
    <location>
        <position position="283"/>
    </location>
    <ligand>
        <name>CoA</name>
        <dbReference type="ChEBI" id="CHEBI:57287"/>
    </ligand>
</feature>
<feature type="binding site" evidence="2">
    <location>
        <position position="332"/>
    </location>
    <ligand>
        <name>CoA</name>
        <dbReference type="ChEBI" id="CHEBI:57287"/>
    </ligand>
</feature>
<keyword id="KW-1003">Cell membrane</keyword>
<keyword id="KW-0256">Endoplasmic reticulum</keyword>
<keyword id="KW-0472">Membrane</keyword>
<keyword id="KW-0539">Nucleus</keyword>
<keyword id="KW-1185">Reference proteome</keyword>
<keyword id="KW-0812">Transmembrane</keyword>
<keyword id="KW-1133">Transmembrane helix</keyword>
<gene>
    <name evidence="4" type="primary">Tmem120a</name>
</gene>
<sequence>MQSPPPDPLGDCLRNWEDLQQDFQGIQETHRLYRVKLEELTKLQDNCTNSITRQKKRLQELALVLKKCRPSLPSESLEAAQELESQIKERQGLFFDMEAYLPKKNGLYLSLVLGNVNVTLLSKQAKFAYKDEYEKFKLYLTIILIVISFTCRFLLNSRVTDAAFNFLLVWYYCTLTIRESILINNGSRIKGWWVFHHYVSTFLSGVMLTWPDGLMYQKFRNQFLSFSMYQSFVQFLQYYYQSGCLYRLRALGERHTMDLTVEGFQSWMWRGLTFLLPFLFFGHFWQLFNALTLFNLARDPECKEWQVLMCGLPFLLLFLGNFFTTLRVVHQKFHSQQHGSKKD</sequence>
<name>TACAN_RAT</name>
<proteinExistence type="evidence at transcript level"/>